<accession>A4WN96</accession>
<organism>
    <name type="scientific">Pyrobaculum arsenaticum (strain DSM 13514 / JCM 11321 / PZ6)</name>
    <dbReference type="NCBI Taxonomy" id="340102"/>
    <lineage>
        <taxon>Archaea</taxon>
        <taxon>Thermoproteota</taxon>
        <taxon>Thermoprotei</taxon>
        <taxon>Thermoproteales</taxon>
        <taxon>Thermoproteaceae</taxon>
        <taxon>Pyrobaculum</taxon>
    </lineage>
</organism>
<name>AATA_PYRAR</name>
<reference key="1">
    <citation type="submission" date="2007-04" db="EMBL/GenBank/DDBJ databases">
        <title>Complete sequence of Pyrobaculum arsenaticum DSM 13514.</title>
        <authorList>
            <consortium name="US DOE Joint Genome Institute"/>
            <person name="Copeland A."/>
            <person name="Lucas S."/>
            <person name="Lapidus A."/>
            <person name="Barry K."/>
            <person name="Glavina del Rio T."/>
            <person name="Dalin E."/>
            <person name="Tice H."/>
            <person name="Pitluck S."/>
            <person name="Chain P."/>
            <person name="Malfatti S."/>
            <person name="Shin M."/>
            <person name="Vergez L."/>
            <person name="Schmutz J."/>
            <person name="Larimer F."/>
            <person name="Land M."/>
            <person name="Hauser L."/>
            <person name="Kyrpides N."/>
            <person name="Mikhailova N."/>
            <person name="Cozen A.E."/>
            <person name="Fitz-Gibbon S.T."/>
            <person name="House C.H."/>
            <person name="Saltikov C."/>
            <person name="Lowe T.M."/>
            <person name="Richardson P."/>
        </authorList>
    </citation>
    <scope>NUCLEOTIDE SEQUENCE [LARGE SCALE GENOMIC DNA]</scope>
    <source>
        <strain>ATCC 700994 / DSM 13514 / JCM 11321 / PZ6</strain>
    </source>
</reference>
<evidence type="ECO:0000255" key="1">
    <source>
        <dbReference type="HAMAP-Rule" id="MF_00309"/>
    </source>
</evidence>
<dbReference type="EC" id="7.1.2.2" evidence="1"/>
<dbReference type="EMBL" id="CP000660">
    <property type="protein sequence ID" value="ABP51863.1"/>
    <property type="molecule type" value="Genomic_DNA"/>
</dbReference>
<dbReference type="RefSeq" id="WP_011901766.1">
    <property type="nucleotide sequence ID" value="NC_009376.1"/>
</dbReference>
<dbReference type="SMR" id="A4WN96"/>
<dbReference type="STRING" id="340102.Pars_2319"/>
<dbReference type="GeneID" id="5054900"/>
<dbReference type="KEGG" id="pas:Pars_2319"/>
<dbReference type="HOGENOM" id="CLU_008162_3_1_2"/>
<dbReference type="OrthoDB" id="115235at2157"/>
<dbReference type="PhylomeDB" id="A4WN96"/>
<dbReference type="Proteomes" id="UP000001567">
    <property type="component" value="Chromosome"/>
</dbReference>
<dbReference type="GO" id="GO:0005886">
    <property type="term" value="C:plasma membrane"/>
    <property type="evidence" value="ECO:0007669"/>
    <property type="project" value="UniProtKB-SubCell"/>
</dbReference>
<dbReference type="GO" id="GO:0005524">
    <property type="term" value="F:ATP binding"/>
    <property type="evidence" value="ECO:0007669"/>
    <property type="project" value="UniProtKB-UniRule"/>
</dbReference>
<dbReference type="GO" id="GO:0046933">
    <property type="term" value="F:proton-transporting ATP synthase activity, rotational mechanism"/>
    <property type="evidence" value="ECO:0007669"/>
    <property type="project" value="UniProtKB-UniRule"/>
</dbReference>
<dbReference type="GO" id="GO:0046961">
    <property type="term" value="F:proton-transporting ATPase activity, rotational mechanism"/>
    <property type="evidence" value="ECO:0007669"/>
    <property type="project" value="InterPro"/>
</dbReference>
<dbReference type="GO" id="GO:0042777">
    <property type="term" value="P:proton motive force-driven plasma membrane ATP synthesis"/>
    <property type="evidence" value="ECO:0007669"/>
    <property type="project" value="UniProtKB-UniRule"/>
</dbReference>
<dbReference type="CDD" id="cd18111">
    <property type="entry name" value="ATP-synt_V_A-type_alpha_C"/>
    <property type="match status" value="1"/>
</dbReference>
<dbReference type="CDD" id="cd18119">
    <property type="entry name" value="ATP-synt_V_A-type_alpha_N"/>
    <property type="match status" value="1"/>
</dbReference>
<dbReference type="CDD" id="cd01134">
    <property type="entry name" value="V_A-ATPase_A"/>
    <property type="match status" value="1"/>
</dbReference>
<dbReference type="FunFam" id="2.40.30.20:FF:000002">
    <property type="entry name" value="V-type proton ATPase catalytic subunit A"/>
    <property type="match status" value="1"/>
</dbReference>
<dbReference type="Gene3D" id="2.40.30.20">
    <property type="match status" value="1"/>
</dbReference>
<dbReference type="Gene3D" id="2.40.50.100">
    <property type="match status" value="1"/>
</dbReference>
<dbReference type="Gene3D" id="1.10.1140.10">
    <property type="entry name" value="Bovine Mitochondrial F1-atpase, Atp Synthase Beta Chain, Chain D, domain 3"/>
    <property type="match status" value="1"/>
</dbReference>
<dbReference type="Gene3D" id="3.40.50.300">
    <property type="entry name" value="P-loop containing nucleotide triphosphate hydrolases"/>
    <property type="match status" value="1"/>
</dbReference>
<dbReference type="HAMAP" id="MF_00309">
    <property type="entry name" value="ATP_synth_A_arch"/>
    <property type="match status" value="1"/>
</dbReference>
<dbReference type="InterPro" id="IPR055190">
    <property type="entry name" value="ATP-synt_VA_C"/>
</dbReference>
<dbReference type="InterPro" id="IPR031686">
    <property type="entry name" value="ATP-synth_a_Xtn"/>
</dbReference>
<dbReference type="InterPro" id="IPR023366">
    <property type="entry name" value="ATP_synth_asu-like_sf"/>
</dbReference>
<dbReference type="InterPro" id="IPR004100">
    <property type="entry name" value="ATPase_F1/V1/A1_a/bsu_N"/>
</dbReference>
<dbReference type="InterPro" id="IPR036121">
    <property type="entry name" value="ATPase_F1/V1/A1_a/bsu_N_sf"/>
</dbReference>
<dbReference type="InterPro" id="IPR000194">
    <property type="entry name" value="ATPase_F1/V1/A1_a/bsu_nucl-bd"/>
</dbReference>
<dbReference type="InterPro" id="IPR024034">
    <property type="entry name" value="ATPase_F1/V1_b/a_C"/>
</dbReference>
<dbReference type="InterPro" id="IPR027417">
    <property type="entry name" value="P-loop_NTPase"/>
</dbReference>
<dbReference type="InterPro" id="IPR022878">
    <property type="entry name" value="V-ATPase_asu"/>
</dbReference>
<dbReference type="NCBIfam" id="NF003220">
    <property type="entry name" value="PRK04192.1"/>
    <property type="match status" value="1"/>
</dbReference>
<dbReference type="PANTHER" id="PTHR43607:SF1">
    <property type="entry name" value="H(+)-TRANSPORTING TWO-SECTOR ATPASE"/>
    <property type="match status" value="1"/>
</dbReference>
<dbReference type="PANTHER" id="PTHR43607">
    <property type="entry name" value="V-TYPE PROTON ATPASE CATALYTIC SUBUNIT A"/>
    <property type="match status" value="1"/>
</dbReference>
<dbReference type="Pfam" id="PF00006">
    <property type="entry name" value="ATP-synt_ab"/>
    <property type="match status" value="1"/>
</dbReference>
<dbReference type="Pfam" id="PF02874">
    <property type="entry name" value="ATP-synt_ab_N"/>
    <property type="match status" value="1"/>
</dbReference>
<dbReference type="Pfam" id="PF16886">
    <property type="entry name" value="ATP-synt_ab_Xtn"/>
    <property type="match status" value="1"/>
</dbReference>
<dbReference type="Pfam" id="PF22919">
    <property type="entry name" value="ATP-synt_VA_C"/>
    <property type="match status" value="1"/>
</dbReference>
<dbReference type="SUPFAM" id="SSF47917">
    <property type="entry name" value="C-terminal domain of alpha and beta subunits of F1 ATP synthase"/>
    <property type="match status" value="1"/>
</dbReference>
<dbReference type="SUPFAM" id="SSF50615">
    <property type="entry name" value="N-terminal domain of alpha and beta subunits of F1 ATP synthase"/>
    <property type="match status" value="1"/>
</dbReference>
<dbReference type="SUPFAM" id="SSF52540">
    <property type="entry name" value="P-loop containing nucleoside triphosphate hydrolases"/>
    <property type="match status" value="1"/>
</dbReference>
<gene>
    <name evidence="1" type="primary">atpA</name>
    <name type="ordered locus">Pars_2319</name>
</gene>
<comment type="function">
    <text evidence="1">Component of the A-type ATP synthase that produces ATP from ADP in the presence of a proton gradient across the membrane. The A chain is the catalytic subunit.</text>
</comment>
<comment type="catalytic activity">
    <reaction evidence="1">
        <text>ATP + H2O + 4 H(+)(in) = ADP + phosphate + 5 H(+)(out)</text>
        <dbReference type="Rhea" id="RHEA:57720"/>
        <dbReference type="ChEBI" id="CHEBI:15377"/>
        <dbReference type="ChEBI" id="CHEBI:15378"/>
        <dbReference type="ChEBI" id="CHEBI:30616"/>
        <dbReference type="ChEBI" id="CHEBI:43474"/>
        <dbReference type="ChEBI" id="CHEBI:456216"/>
        <dbReference type="EC" id="7.1.2.2"/>
    </reaction>
</comment>
<comment type="subunit">
    <text evidence="1">Has multiple subunits with at least A(3), B(3), C, D, E, F, H, I and proteolipid K(x).</text>
</comment>
<comment type="subcellular location">
    <subcellularLocation>
        <location evidence="1">Cell membrane</location>
        <topology evidence="1">Peripheral membrane protein</topology>
    </subcellularLocation>
</comment>
<comment type="similarity">
    <text evidence="1">Belongs to the ATPase alpha/beta chains family.</text>
</comment>
<feature type="chain" id="PRO_1000059349" description="A-type ATP synthase subunit A">
    <location>
        <begin position="1"/>
        <end position="593"/>
    </location>
</feature>
<feature type="binding site" evidence="1">
    <location>
        <begin position="236"/>
        <end position="243"/>
    </location>
    <ligand>
        <name>ATP</name>
        <dbReference type="ChEBI" id="CHEBI:30616"/>
    </ligand>
</feature>
<protein>
    <recommendedName>
        <fullName evidence="1">A-type ATP synthase subunit A</fullName>
        <ecNumber evidence="1">7.1.2.2</ecNumber>
    </recommendedName>
</protein>
<keyword id="KW-0066">ATP synthesis</keyword>
<keyword id="KW-0067">ATP-binding</keyword>
<keyword id="KW-1003">Cell membrane</keyword>
<keyword id="KW-0375">Hydrogen ion transport</keyword>
<keyword id="KW-0406">Ion transport</keyword>
<keyword id="KW-0472">Membrane</keyword>
<keyword id="KW-0547">Nucleotide-binding</keyword>
<keyword id="KW-1278">Translocase</keyword>
<keyword id="KW-0813">Transport</keyword>
<proteinExistence type="inferred from homology"/>
<sequence length="593" mass="66198">MSGKIEYISGPVVKADLPGARLYELVFVGEIRLFGEVVRVQGDKAFIQVYEDTTGLKPGEPVERTGEPLSAWLGPTIIGKIYDGVQRPLKDIEEISKNPFIARGIGYDKAPPLDLKSEFDFRPAVKPGDEVSPGDVLGSVKETELMTHYILYPPLPEHAPGVVEWVAEGKYKVDDVIARIKTKRGVVEVKMWHKWPVRRPRPFREKLPPVEPLITGVRTVDTMFPIAKGGAAAVPGPFGSGKTVMIRTLSMFAQSRFIIPVLCGERGNEAADALQGLLKLKDPATGRPLLERTTIIVNTSNMPVAAREASVYMGTTLGEYFRDQGYDVLVLADSTSRWAEAMREVALRIGEMPSEEGYPAYLPTRLAEFYERAGRVVLMGSKERIGSLTIAASVSPPGGDFTEPVTSNTLRFIGAFWPLSPRLAYSRHYPAIDWLAAFSRYVDTVEVWWSKNVSPEWRKIRDSLQSLLVKEAELQEIVRILGTEALSEYEKHILNVAFMIREGFLKQDAYNPIDTPSAPIKQFLLMKAIYTYYEEGLKAIEAGVPASALRELDSVKRLPRLRMEVTNDAAKEQLTKFIETLVLEIREKVARKS</sequence>